<dbReference type="EMBL" id="CP001138">
    <property type="protein sequence ID" value="ACH49907.1"/>
    <property type="molecule type" value="Genomic_DNA"/>
</dbReference>
<dbReference type="RefSeq" id="WP_000850547.1">
    <property type="nucleotide sequence ID" value="NC_011149.1"/>
</dbReference>
<dbReference type="SMR" id="B5EZ76"/>
<dbReference type="GeneID" id="83645644"/>
<dbReference type="KEGG" id="sea:SeAg_B0678"/>
<dbReference type="HOGENOM" id="CLU_161438_2_1_6"/>
<dbReference type="Proteomes" id="UP000008819">
    <property type="component" value="Chromosome"/>
</dbReference>
<dbReference type="GO" id="GO:0005829">
    <property type="term" value="C:cytosol"/>
    <property type="evidence" value="ECO:0007669"/>
    <property type="project" value="TreeGrafter"/>
</dbReference>
<dbReference type="FunFam" id="3.30.70.260:FF:000002">
    <property type="entry name" value="UPF0250 protein YbeD"/>
    <property type="match status" value="1"/>
</dbReference>
<dbReference type="Gene3D" id="3.30.70.260">
    <property type="match status" value="1"/>
</dbReference>
<dbReference type="HAMAP" id="MF_00659">
    <property type="entry name" value="UPF0250"/>
    <property type="match status" value="1"/>
</dbReference>
<dbReference type="InterPro" id="IPR007454">
    <property type="entry name" value="UPF0250_YbeD-like"/>
</dbReference>
<dbReference type="InterPro" id="IPR027471">
    <property type="entry name" value="YbeD-like_sf"/>
</dbReference>
<dbReference type="NCBIfam" id="NF003447">
    <property type="entry name" value="PRK04998.1"/>
    <property type="match status" value="1"/>
</dbReference>
<dbReference type="PANTHER" id="PTHR38036">
    <property type="entry name" value="UPF0250 PROTEIN YBED"/>
    <property type="match status" value="1"/>
</dbReference>
<dbReference type="PANTHER" id="PTHR38036:SF1">
    <property type="entry name" value="UPF0250 PROTEIN YBED"/>
    <property type="match status" value="1"/>
</dbReference>
<dbReference type="Pfam" id="PF04359">
    <property type="entry name" value="DUF493"/>
    <property type="match status" value="1"/>
</dbReference>
<dbReference type="SUPFAM" id="SSF117991">
    <property type="entry name" value="YbeD/HP0495-like"/>
    <property type="match status" value="1"/>
</dbReference>
<evidence type="ECO:0000255" key="1">
    <source>
        <dbReference type="HAMAP-Rule" id="MF_00659"/>
    </source>
</evidence>
<reference key="1">
    <citation type="journal article" date="2011" name="J. Bacteriol.">
        <title>Comparative genomics of 28 Salmonella enterica isolates: evidence for CRISPR-mediated adaptive sublineage evolution.</title>
        <authorList>
            <person name="Fricke W.F."/>
            <person name="Mammel M.K."/>
            <person name="McDermott P.F."/>
            <person name="Tartera C."/>
            <person name="White D.G."/>
            <person name="Leclerc J.E."/>
            <person name="Ravel J."/>
            <person name="Cebula T.A."/>
        </authorList>
    </citation>
    <scope>NUCLEOTIDE SEQUENCE [LARGE SCALE GENOMIC DNA]</scope>
    <source>
        <strain>SL483</strain>
    </source>
</reference>
<gene>
    <name evidence="1" type="primary">ybeD</name>
    <name type="ordered locus">SeAg_B0678</name>
</gene>
<accession>B5EZ76</accession>
<sequence>MKTKLNELLEFPTPFTYKVMGQALPELVDQVVEVVQRHAPGDYSPTVKPSSKGNYHSVSITINATHIEQVETLYEELGNIDIVRMVL</sequence>
<comment type="similarity">
    <text evidence="1">Belongs to the UPF0250 family.</text>
</comment>
<organism>
    <name type="scientific">Salmonella agona (strain SL483)</name>
    <dbReference type="NCBI Taxonomy" id="454166"/>
    <lineage>
        <taxon>Bacteria</taxon>
        <taxon>Pseudomonadati</taxon>
        <taxon>Pseudomonadota</taxon>
        <taxon>Gammaproteobacteria</taxon>
        <taxon>Enterobacterales</taxon>
        <taxon>Enterobacteriaceae</taxon>
        <taxon>Salmonella</taxon>
    </lineage>
</organism>
<proteinExistence type="inferred from homology"/>
<name>YBED_SALA4</name>
<protein>
    <recommendedName>
        <fullName evidence="1">UPF0250 protein YbeD</fullName>
    </recommendedName>
</protein>
<feature type="chain" id="PRO_1000131253" description="UPF0250 protein YbeD">
    <location>
        <begin position="1"/>
        <end position="87"/>
    </location>
</feature>